<keyword id="KW-0067">ATP-binding</keyword>
<keyword id="KW-0997">Cell inner membrane</keyword>
<keyword id="KW-1003">Cell membrane</keyword>
<keyword id="KW-0418">Kinase</keyword>
<keyword id="KW-0472">Membrane</keyword>
<keyword id="KW-0547">Nucleotide-binding</keyword>
<keyword id="KW-1185">Reference proteome</keyword>
<keyword id="KW-0808">Transferase</keyword>
<keyword id="KW-0812">Transmembrane</keyword>
<keyword id="KW-1133">Transmembrane helix</keyword>
<keyword id="KW-0831">Ubiquinone biosynthesis</keyword>
<dbReference type="EC" id="2.7.-.-" evidence="1"/>
<dbReference type="EMBL" id="AL646052">
    <property type="protein sequence ID" value="CAD13989.1"/>
    <property type="molecule type" value="Genomic_DNA"/>
</dbReference>
<dbReference type="RefSeq" id="WP_011000422.1">
    <property type="nucleotide sequence ID" value="NC_003295.1"/>
</dbReference>
<dbReference type="SMR" id="Q8Y275"/>
<dbReference type="STRING" id="267608.RSc0461"/>
<dbReference type="EnsemblBacteria" id="CAD13989">
    <property type="protein sequence ID" value="CAD13989"/>
    <property type="gene ID" value="RSc0461"/>
</dbReference>
<dbReference type="KEGG" id="rso:RSc0461"/>
<dbReference type="eggNOG" id="COG0661">
    <property type="taxonomic scope" value="Bacteria"/>
</dbReference>
<dbReference type="HOGENOM" id="CLU_006533_0_0_4"/>
<dbReference type="UniPathway" id="UPA00232"/>
<dbReference type="Proteomes" id="UP000001436">
    <property type="component" value="Chromosome"/>
</dbReference>
<dbReference type="GO" id="GO:0005886">
    <property type="term" value="C:plasma membrane"/>
    <property type="evidence" value="ECO:0007669"/>
    <property type="project" value="UniProtKB-SubCell"/>
</dbReference>
<dbReference type="GO" id="GO:0005524">
    <property type="term" value="F:ATP binding"/>
    <property type="evidence" value="ECO:0007669"/>
    <property type="project" value="UniProtKB-KW"/>
</dbReference>
<dbReference type="GO" id="GO:0004672">
    <property type="term" value="F:protein kinase activity"/>
    <property type="evidence" value="ECO:0007669"/>
    <property type="project" value="UniProtKB-UniRule"/>
</dbReference>
<dbReference type="GO" id="GO:0010795">
    <property type="term" value="P:regulation of ubiquinone biosynthetic process"/>
    <property type="evidence" value="ECO:0007669"/>
    <property type="project" value="UniProtKB-UniRule"/>
</dbReference>
<dbReference type="GO" id="GO:0006744">
    <property type="term" value="P:ubiquinone biosynthetic process"/>
    <property type="evidence" value="ECO:0007669"/>
    <property type="project" value="UniProtKB-UniPathway"/>
</dbReference>
<dbReference type="CDD" id="cd13972">
    <property type="entry name" value="UbiB"/>
    <property type="match status" value="1"/>
</dbReference>
<dbReference type="HAMAP" id="MF_00414">
    <property type="entry name" value="UbiB"/>
    <property type="match status" value="1"/>
</dbReference>
<dbReference type="InterPro" id="IPR004147">
    <property type="entry name" value="ABC1_dom"/>
</dbReference>
<dbReference type="InterPro" id="IPR011009">
    <property type="entry name" value="Kinase-like_dom_sf"/>
</dbReference>
<dbReference type="InterPro" id="IPR000719">
    <property type="entry name" value="Prot_kinase_dom"/>
</dbReference>
<dbReference type="InterPro" id="IPR010232">
    <property type="entry name" value="UbiB"/>
</dbReference>
<dbReference type="InterPro" id="IPR045308">
    <property type="entry name" value="UbiB_bact"/>
</dbReference>
<dbReference type="InterPro" id="IPR050154">
    <property type="entry name" value="UbiB_kinase"/>
</dbReference>
<dbReference type="NCBIfam" id="NF003404">
    <property type="entry name" value="PRK04750.1"/>
    <property type="match status" value="1"/>
</dbReference>
<dbReference type="NCBIfam" id="TIGR01982">
    <property type="entry name" value="UbiB"/>
    <property type="match status" value="1"/>
</dbReference>
<dbReference type="PANTHER" id="PTHR10566">
    <property type="entry name" value="CHAPERONE-ACTIVITY OF BC1 COMPLEX CABC1 -RELATED"/>
    <property type="match status" value="1"/>
</dbReference>
<dbReference type="PANTHER" id="PTHR10566:SF113">
    <property type="entry name" value="PROTEIN ACTIVITY OF BC1 COMPLEX KINASE 7, CHLOROPLASTIC"/>
    <property type="match status" value="1"/>
</dbReference>
<dbReference type="Pfam" id="PF03109">
    <property type="entry name" value="ABC1"/>
    <property type="match status" value="1"/>
</dbReference>
<dbReference type="SUPFAM" id="SSF56112">
    <property type="entry name" value="Protein kinase-like (PK-like)"/>
    <property type="match status" value="1"/>
</dbReference>
<dbReference type="PROSITE" id="PS50011">
    <property type="entry name" value="PROTEIN_KINASE_DOM"/>
    <property type="match status" value="1"/>
</dbReference>
<feature type="chain" id="PRO_0000200716" description="Probable protein kinase UbiB">
    <location>
        <begin position="1"/>
        <end position="525"/>
    </location>
</feature>
<feature type="transmembrane region" description="Helical" evidence="1">
    <location>
        <begin position="502"/>
        <end position="522"/>
    </location>
</feature>
<feature type="domain" description="Protein kinase" evidence="1">
    <location>
        <begin position="119"/>
        <end position="501"/>
    </location>
</feature>
<feature type="active site" description="Proton acceptor" evidence="1">
    <location>
        <position position="286"/>
    </location>
</feature>
<feature type="binding site" evidence="1">
    <location>
        <begin position="125"/>
        <end position="133"/>
    </location>
    <ligand>
        <name>ATP</name>
        <dbReference type="ChEBI" id="CHEBI:30616"/>
    </ligand>
</feature>
<feature type="binding site" evidence="1">
    <location>
        <position position="151"/>
    </location>
    <ligand>
        <name>ATP</name>
        <dbReference type="ChEBI" id="CHEBI:30616"/>
    </ligand>
</feature>
<name>UBIB_RALN1</name>
<accession>Q8Y275</accession>
<proteinExistence type="inferred from homology"/>
<organism>
    <name type="scientific">Ralstonia nicotianae (strain ATCC BAA-1114 / GMI1000)</name>
    <name type="common">Ralstonia solanacearum</name>
    <dbReference type="NCBI Taxonomy" id="267608"/>
    <lineage>
        <taxon>Bacteria</taxon>
        <taxon>Pseudomonadati</taxon>
        <taxon>Pseudomonadota</taxon>
        <taxon>Betaproteobacteria</taxon>
        <taxon>Burkholderiales</taxon>
        <taxon>Burkholderiaceae</taxon>
        <taxon>Ralstonia</taxon>
        <taxon>Ralstonia solanacearum species complex</taxon>
    </lineage>
</organism>
<comment type="function">
    <text evidence="1">Is probably a protein kinase regulator of UbiI activity which is involved in aerobic coenzyme Q (ubiquinone) biosynthesis.</text>
</comment>
<comment type="pathway">
    <text>Cofactor biosynthesis; ubiquinone biosynthesis [regulation].</text>
</comment>
<comment type="subcellular location">
    <subcellularLocation>
        <location evidence="1">Cell inner membrane</location>
        <topology evidence="1">Single-pass membrane protein</topology>
    </subcellularLocation>
</comment>
<comment type="similarity">
    <text evidence="1">Belongs to the ABC1 family. UbiB subfamily.</text>
</comment>
<sequence length="525" mass="59803">MTRLFRLCKIIFVILYHGLDQLALSGFKSRRIRALVWVLTLGRRQTRPRGERLRLALEQLGPIFVKFGQVLSTRRDLLPPDVADELAKLQDRVPPFDPKIAAAIVERSLGKPLSALFHRFDHHPVASASIAQVHFATLRGGPDDGREVAVKVLRPGMLPVIDSDLALMRDVATWMEKLWADGKRLKPREVVAEFDKYLHDELDLMREAANASQLRRNFAKSELLLVPEVFWDWCTSEVFVMERMHGVRVSHADELRAAGVDTHKLARDGVEIFFTQVFRDGFFHADMHPGNILVSVAPESLGRYIALDFGIVGALSEFDKNYLAQNFLAFFQRDYHRVALLHVESGWAPEETRVEELEGAIRACCEPYFDRPLGEISLGLVLMRLFQTSRRFNVEVQPQLVLLQKTLLNVEGLGRQLDPDLDLWKTAKPFLERWMHEQIGWRGLVDRLKIEAPQWANMLPDFPRLAHQILERHARDNGSAQTATLSALLAEQRRTNRLLSAALLFIGGFAVGIIATHVLAWLARH</sequence>
<gene>
    <name evidence="1" type="primary">ubiB</name>
    <name type="synonym">aarF</name>
    <name type="ordered locus">RSc0461</name>
    <name type="ORF">RS04437</name>
</gene>
<protein>
    <recommendedName>
        <fullName evidence="1">Probable protein kinase UbiB</fullName>
        <ecNumber evidence="1">2.7.-.-</ecNumber>
    </recommendedName>
    <alternativeName>
        <fullName evidence="1">Ubiquinone biosynthesis protein UbiB</fullName>
    </alternativeName>
</protein>
<evidence type="ECO:0000255" key="1">
    <source>
        <dbReference type="HAMAP-Rule" id="MF_00414"/>
    </source>
</evidence>
<reference key="1">
    <citation type="journal article" date="2002" name="Nature">
        <title>Genome sequence of the plant pathogen Ralstonia solanacearum.</title>
        <authorList>
            <person name="Salanoubat M."/>
            <person name="Genin S."/>
            <person name="Artiguenave F."/>
            <person name="Gouzy J."/>
            <person name="Mangenot S."/>
            <person name="Arlat M."/>
            <person name="Billault A."/>
            <person name="Brottier P."/>
            <person name="Camus J.-C."/>
            <person name="Cattolico L."/>
            <person name="Chandler M."/>
            <person name="Choisne N."/>
            <person name="Claudel-Renard C."/>
            <person name="Cunnac S."/>
            <person name="Demange N."/>
            <person name="Gaspin C."/>
            <person name="Lavie M."/>
            <person name="Moisan A."/>
            <person name="Robert C."/>
            <person name="Saurin W."/>
            <person name="Schiex T."/>
            <person name="Siguier P."/>
            <person name="Thebault P."/>
            <person name="Whalen M."/>
            <person name="Wincker P."/>
            <person name="Levy M."/>
            <person name="Weissenbach J."/>
            <person name="Boucher C.A."/>
        </authorList>
    </citation>
    <scope>NUCLEOTIDE SEQUENCE [LARGE SCALE GENOMIC DNA]</scope>
    <source>
        <strain>ATCC BAA-1114 / GMI1000</strain>
    </source>
</reference>